<name>ZN213_HUMAN</name>
<comment type="function">
    <text>May be involved in transcriptional regulation.</text>
</comment>
<comment type="interaction">
    <interactant intactId="EBI-12838388">
        <id>O14771</id>
    </interactant>
    <interactant intactId="EBI-747840">
        <id>Q96G04</id>
        <label>EEF2KMT</label>
    </interactant>
    <organismsDiffer>false</organismsDiffer>
    <experiments>3</experiments>
</comment>
<comment type="interaction">
    <interactant intactId="EBI-12838388">
        <id>O14771</id>
    </interactant>
    <interactant intactId="EBI-2510157">
        <id>Q96EF6</id>
        <label>FBXO17</label>
    </interactant>
    <organismsDiffer>false</organismsDiffer>
    <experiments>3</experiments>
</comment>
<comment type="interaction">
    <interactant intactId="EBI-12838388">
        <id>O14771</id>
    </interactant>
    <interactant intactId="EBI-2798728">
        <id>P61968</id>
        <label>LMO4</label>
    </interactant>
    <organismsDiffer>false</organismsDiffer>
    <experiments>3</experiments>
</comment>
<comment type="interaction">
    <interactant intactId="EBI-12838388">
        <id>O14771</id>
    </interactant>
    <interactant intactId="EBI-739832">
        <id>Q8TBB1</id>
        <label>LNX1</label>
    </interactant>
    <organismsDiffer>false</organismsDiffer>
    <experiments>3</experiments>
</comment>
<comment type="interaction">
    <interactant intactId="EBI-12838388">
        <id>O14771</id>
    </interactant>
    <interactant intactId="EBI-368321">
        <id>O60437</id>
        <label>PPL</label>
    </interactant>
    <organismsDiffer>false</organismsDiffer>
    <experiments>3</experiments>
</comment>
<comment type="interaction">
    <interactant intactId="EBI-12838388">
        <id>O14771</id>
    </interactant>
    <interactant intactId="EBI-745846">
        <id>P57086</id>
        <label>SCAND1</label>
    </interactant>
    <organismsDiffer>false</organismsDiffer>
    <experiments>5</experiments>
</comment>
<comment type="interaction">
    <interactant intactId="EBI-12838388">
        <id>O14771</id>
    </interactant>
    <interactant intactId="EBI-10281938">
        <id>Q9Y5A6</id>
        <label>ZSCAN21</label>
    </interactant>
    <organismsDiffer>false</organismsDiffer>
    <experiments>4</experiments>
</comment>
<comment type="subcellular location">
    <subcellularLocation>
        <location evidence="3">Nucleus</location>
    </subcellularLocation>
</comment>
<comment type="alternative products">
    <event type="alternative splicing"/>
    <isoform>
        <id>O14771-1</id>
        <name>1</name>
        <sequence type="displayed"/>
    </isoform>
    <isoform>
        <id>O14771-2</id>
        <name>2</name>
        <sequence type="described" ref="VSP_055942 VSP_055943"/>
    </isoform>
</comment>
<comment type="tissue specificity">
    <text evidence="5">Widely expressed with highest levels in testis.</text>
</comment>
<comment type="similarity">
    <text evidence="7">Belongs to the krueppel C2H2-type zinc-finger protein family.</text>
</comment>
<comment type="sequence caution" evidence="7">
    <conflict type="frameshift">
        <sequence resource="EMBL-CDS" id="AAB70531"/>
    </conflict>
</comment>
<accession>O14771</accession>
<accession>A8K1B9</accession>
<accession>B4DMG6</accession>
<accession>Q96IS1</accession>
<keyword id="KW-0025">Alternative splicing</keyword>
<keyword id="KW-0238">DNA-binding</keyword>
<keyword id="KW-0479">Metal-binding</keyword>
<keyword id="KW-0539">Nucleus</keyword>
<keyword id="KW-1267">Proteomics identification</keyword>
<keyword id="KW-1185">Reference proteome</keyword>
<keyword id="KW-0677">Repeat</keyword>
<keyword id="KW-0804">Transcription</keyword>
<keyword id="KW-0805">Transcription regulation</keyword>
<keyword id="KW-0862">Zinc</keyword>
<keyword id="KW-0863">Zinc-finger</keyword>
<feature type="chain" id="PRO_0000047457" description="Zinc finger protein 213">
    <location>
        <begin position="1"/>
        <end position="459"/>
    </location>
</feature>
<feature type="domain" description="SCAN box" evidence="3">
    <location>
        <begin position="45"/>
        <end position="126"/>
    </location>
</feature>
<feature type="domain" description="KRAB" evidence="2">
    <location>
        <begin position="202"/>
        <end position="292"/>
    </location>
</feature>
<feature type="zinc finger region" description="C2H2-type 1" evidence="1">
    <location>
        <begin position="317"/>
        <end position="339"/>
    </location>
</feature>
<feature type="zinc finger region" description="C2H2-type 2" evidence="1">
    <location>
        <begin position="345"/>
        <end position="367"/>
    </location>
</feature>
<feature type="zinc finger region" description="C2H2-type 3" evidence="1">
    <location>
        <begin position="373"/>
        <end position="395"/>
    </location>
</feature>
<feature type="zinc finger region" description="C2H2-type 4" evidence="1">
    <location>
        <begin position="401"/>
        <end position="423"/>
    </location>
</feature>
<feature type="zinc finger region" description="C2H2-type 5" evidence="1">
    <location>
        <begin position="429"/>
        <end position="451"/>
    </location>
</feature>
<feature type="region of interest" description="Disordered" evidence="4">
    <location>
        <begin position="128"/>
        <end position="188"/>
    </location>
</feature>
<feature type="splice variant" id="VSP_055942" description="In isoform 2." evidence="6">
    <original>MAAPLEAQDQAPGEGEGLLIVKVEDSSWEQESAQHEDGRDS</original>
    <variation>MCPRRRRNPRLQAGDPRPRGLPRRWGHGGGRLFPRSSTAIA</variation>
    <location>
        <begin position="1"/>
        <end position="41"/>
    </location>
</feature>
<feature type="splice variant" id="VSP_055943" description="In isoform 2." evidence="6">
    <location>
        <begin position="42"/>
        <end position="199"/>
    </location>
</feature>
<feature type="sequence conflict" description="In Ref. 1; AAB70531." evidence="7" ref="1">
    <original>G</original>
    <variation>A</variation>
    <location>
        <position position="407"/>
    </location>
</feature>
<reference key="1">
    <citation type="journal article" date="1999" name="Biochim. Biophys. Acta">
        <title>Identification and characterization of a zinc finger gene (ZNF213) from 16p13.3.</title>
        <authorList>
            <person name="Chen X."/>
            <person name="Hamon M."/>
            <person name="Deng Z."/>
            <person name="Centola M."/>
            <person name="Sood R."/>
            <person name="Taylor K."/>
            <person name="Kastner D.L."/>
            <person name="Fischel-Ghodsian N."/>
        </authorList>
    </citation>
    <scope>NUCLEOTIDE SEQUENCE [MRNA] (ISOFORM 1)</scope>
    <scope>TISSUE SPECIFICITY</scope>
    <source>
        <tissue>Peripheral blood leukocyte</tissue>
    </source>
</reference>
<reference key="2">
    <citation type="journal article" date="2004" name="Nat. Genet.">
        <title>Complete sequencing and characterization of 21,243 full-length human cDNAs.</title>
        <authorList>
            <person name="Ota T."/>
            <person name="Suzuki Y."/>
            <person name="Nishikawa T."/>
            <person name="Otsuki T."/>
            <person name="Sugiyama T."/>
            <person name="Irie R."/>
            <person name="Wakamatsu A."/>
            <person name="Hayashi K."/>
            <person name="Sato H."/>
            <person name="Nagai K."/>
            <person name="Kimura K."/>
            <person name="Makita H."/>
            <person name="Sekine M."/>
            <person name="Obayashi M."/>
            <person name="Nishi T."/>
            <person name="Shibahara T."/>
            <person name="Tanaka T."/>
            <person name="Ishii S."/>
            <person name="Yamamoto J."/>
            <person name="Saito K."/>
            <person name="Kawai Y."/>
            <person name="Isono Y."/>
            <person name="Nakamura Y."/>
            <person name="Nagahari K."/>
            <person name="Murakami K."/>
            <person name="Yasuda T."/>
            <person name="Iwayanagi T."/>
            <person name="Wagatsuma M."/>
            <person name="Shiratori A."/>
            <person name="Sudo H."/>
            <person name="Hosoiri T."/>
            <person name="Kaku Y."/>
            <person name="Kodaira H."/>
            <person name="Kondo H."/>
            <person name="Sugawara M."/>
            <person name="Takahashi M."/>
            <person name="Kanda K."/>
            <person name="Yokoi T."/>
            <person name="Furuya T."/>
            <person name="Kikkawa E."/>
            <person name="Omura Y."/>
            <person name="Abe K."/>
            <person name="Kamihara K."/>
            <person name="Katsuta N."/>
            <person name="Sato K."/>
            <person name="Tanikawa M."/>
            <person name="Yamazaki M."/>
            <person name="Ninomiya K."/>
            <person name="Ishibashi T."/>
            <person name="Yamashita H."/>
            <person name="Murakawa K."/>
            <person name="Fujimori K."/>
            <person name="Tanai H."/>
            <person name="Kimata M."/>
            <person name="Watanabe M."/>
            <person name="Hiraoka S."/>
            <person name="Chiba Y."/>
            <person name="Ishida S."/>
            <person name="Ono Y."/>
            <person name="Takiguchi S."/>
            <person name="Watanabe S."/>
            <person name="Yosida M."/>
            <person name="Hotuta T."/>
            <person name="Kusano J."/>
            <person name="Kanehori K."/>
            <person name="Takahashi-Fujii A."/>
            <person name="Hara H."/>
            <person name="Tanase T.-O."/>
            <person name="Nomura Y."/>
            <person name="Togiya S."/>
            <person name="Komai F."/>
            <person name="Hara R."/>
            <person name="Takeuchi K."/>
            <person name="Arita M."/>
            <person name="Imose N."/>
            <person name="Musashino K."/>
            <person name="Yuuki H."/>
            <person name="Oshima A."/>
            <person name="Sasaki N."/>
            <person name="Aotsuka S."/>
            <person name="Yoshikawa Y."/>
            <person name="Matsunawa H."/>
            <person name="Ichihara T."/>
            <person name="Shiohata N."/>
            <person name="Sano S."/>
            <person name="Moriya S."/>
            <person name="Momiyama H."/>
            <person name="Satoh N."/>
            <person name="Takami S."/>
            <person name="Terashima Y."/>
            <person name="Suzuki O."/>
            <person name="Nakagawa S."/>
            <person name="Senoh A."/>
            <person name="Mizoguchi H."/>
            <person name="Goto Y."/>
            <person name="Shimizu F."/>
            <person name="Wakebe H."/>
            <person name="Hishigaki H."/>
            <person name="Watanabe T."/>
            <person name="Sugiyama A."/>
            <person name="Takemoto M."/>
            <person name="Kawakami B."/>
            <person name="Yamazaki M."/>
            <person name="Watanabe K."/>
            <person name="Kumagai A."/>
            <person name="Itakura S."/>
            <person name="Fukuzumi Y."/>
            <person name="Fujimori Y."/>
            <person name="Komiyama M."/>
            <person name="Tashiro H."/>
            <person name="Tanigami A."/>
            <person name="Fujiwara T."/>
            <person name="Ono T."/>
            <person name="Yamada K."/>
            <person name="Fujii Y."/>
            <person name="Ozaki K."/>
            <person name="Hirao M."/>
            <person name="Ohmori Y."/>
            <person name="Kawabata A."/>
            <person name="Hikiji T."/>
            <person name="Kobatake N."/>
            <person name="Inagaki H."/>
            <person name="Ikema Y."/>
            <person name="Okamoto S."/>
            <person name="Okitani R."/>
            <person name="Kawakami T."/>
            <person name="Noguchi S."/>
            <person name="Itoh T."/>
            <person name="Shigeta K."/>
            <person name="Senba T."/>
            <person name="Matsumura K."/>
            <person name="Nakajima Y."/>
            <person name="Mizuno T."/>
            <person name="Morinaga M."/>
            <person name="Sasaki M."/>
            <person name="Togashi T."/>
            <person name="Oyama M."/>
            <person name="Hata H."/>
            <person name="Watanabe M."/>
            <person name="Komatsu T."/>
            <person name="Mizushima-Sugano J."/>
            <person name="Satoh T."/>
            <person name="Shirai Y."/>
            <person name="Takahashi Y."/>
            <person name="Nakagawa K."/>
            <person name="Okumura K."/>
            <person name="Nagase T."/>
            <person name="Nomura N."/>
            <person name="Kikuchi H."/>
            <person name="Masuho Y."/>
            <person name="Yamashita R."/>
            <person name="Nakai K."/>
            <person name="Yada T."/>
            <person name="Nakamura Y."/>
            <person name="Ohara O."/>
            <person name="Isogai T."/>
            <person name="Sugano S."/>
        </authorList>
    </citation>
    <scope>NUCLEOTIDE SEQUENCE [LARGE SCALE MRNA] (ISOFORMS 1 AND 2)</scope>
    <source>
        <tissue>Brain</tissue>
        <tissue>Placenta</tissue>
    </source>
</reference>
<reference key="3">
    <citation type="journal article" date="2004" name="Nature">
        <title>The sequence and analysis of duplication-rich human chromosome 16.</title>
        <authorList>
            <person name="Martin J."/>
            <person name="Han C."/>
            <person name="Gordon L.A."/>
            <person name="Terry A."/>
            <person name="Prabhakar S."/>
            <person name="She X."/>
            <person name="Xie G."/>
            <person name="Hellsten U."/>
            <person name="Chan Y.M."/>
            <person name="Altherr M."/>
            <person name="Couronne O."/>
            <person name="Aerts A."/>
            <person name="Bajorek E."/>
            <person name="Black S."/>
            <person name="Blumer H."/>
            <person name="Branscomb E."/>
            <person name="Brown N.C."/>
            <person name="Bruno W.J."/>
            <person name="Buckingham J.M."/>
            <person name="Callen D.F."/>
            <person name="Campbell C.S."/>
            <person name="Campbell M.L."/>
            <person name="Campbell E.W."/>
            <person name="Caoile C."/>
            <person name="Challacombe J.F."/>
            <person name="Chasteen L.A."/>
            <person name="Chertkov O."/>
            <person name="Chi H.C."/>
            <person name="Christensen M."/>
            <person name="Clark L.M."/>
            <person name="Cohn J.D."/>
            <person name="Denys M."/>
            <person name="Detter J.C."/>
            <person name="Dickson M."/>
            <person name="Dimitrijevic-Bussod M."/>
            <person name="Escobar J."/>
            <person name="Fawcett J.J."/>
            <person name="Flowers D."/>
            <person name="Fotopulos D."/>
            <person name="Glavina T."/>
            <person name="Gomez M."/>
            <person name="Gonzales E."/>
            <person name="Goodstein D."/>
            <person name="Goodwin L.A."/>
            <person name="Grady D.L."/>
            <person name="Grigoriev I."/>
            <person name="Groza M."/>
            <person name="Hammon N."/>
            <person name="Hawkins T."/>
            <person name="Haydu L."/>
            <person name="Hildebrand C.E."/>
            <person name="Huang W."/>
            <person name="Israni S."/>
            <person name="Jett J."/>
            <person name="Jewett P.B."/>
            <person name="Kadner K."/>
            <person name="Kimball H."/>
            <person name="Kobayashi A."/>
            <person name="Krawczyk M.-C."/>
            <person name="Leyba T."/>
            <person name="Longmire J.L."/>
            <person name="Lopez F."/>
            <person name="Lou Y."/>
            <person name="Lowry S."/>
            <person name="Ludeman T."/>
            <person name="Manohar C.F."/>
            <person name="Mark G.A."/>
            <person name="McMurray K.L."/>
            <person name="Meincke L.J."/>
            <person name="Morgan J."/>
            <person name="Moyzis R.K."/>
            <person name="Mundt M.O."/>
            <person name="Munk A.C."/>
            <person name="Nandkeshwar R.D."/>
            <person name="Pitluck S."/>
            <person name="Pollard M."/>
            <person name="Predki P."/>
            <person name="Parson-Quintana B."/>
            <person name="Ramirez L."/>
            <person name="Rash S."/>
            <person name="Retterer J."/>
            <person name="Ricke D.O."/>
            <person name="Robinson D.L."/>
            <person name="Rodriguez A."/>
            <person name="Salamov A."/>
            <person name="Saunders E.H."/>
            <person name="Scott D."/>
            <person name="Shough T."/>
            <person name="Stallings R.L."/>
            <person name="Stalvey M."/>
            <person name="Sutherland R.D."/>
            <person name="Tapia R."/>
            <person name="Tesmer J.G."/>
            <person name="Thayer N."/>
            <person name="Thompson L.S."/>
            <person name="Tice H."/>
            <person name="Torney D.C."/>
            <person name="Tran-Gyamfi M."/>
            <person name="Tsai M."/>
            <person name="Ulanovsky L.E."/>
            <person name="Ustaszewska A."/>
            <person name="Vo N."/>
            <person name="White P.S."/>
            <person name="Williams A.L."/>
            <person name="Wills P.L."/>
            <person name="Wu J.-R."/>
            <person name="Wu K."/>
            <person name="Yang J."/>
            <person name="DeJong P."/>
            <person name="Bruce D."/>
            <person name="Doggett N.A."/>
            <person name="Deaven L."/>
            <person name="Schmutz J."/>
            <person name="Grimwood J."/>
            <person name="Richardson P."/>
            <person name="Rokhsar D.S."/>
            <person name="Eichler E.E."/>
            <person name="Gilna P."/>
            <person name="Lucas S.M."/>
            <person name="Myers R.M."/>
            <person name="Rubin E.M."/>
            <person name="Pennacchio L.A."/>
        </authorList>
    </citation>
    <scope>NUCLEOTIDE SEQUENCE [LARGE SCALE GENOMIC DNA]</scope>
</reference>
<reference key="4">
    <citation type="submission" date="2005-09" db="EMBL/GenBank/DDBJ databases">
        <authorList>
            <person name="Mural R.J."/>
            <person name="Istrail S."/>
            <person name="Sutton G.G."/>
            <person name="Florea L."/>
            <person name="Halpern A.L."/>
            <person name="Mobarry C.M."/>
            <person name="Lippert R."/>
            <person name="Walenz B."/>
            <person name="Shatkay H."/>
            <person name="Dew I."/>
            <person name="Miller J.R."/>
            <person name="Flanigan M.J."/>
            <person name="Edwards N.J."/>
            <person name="Bolanos R."/>
            <person name="Fasulo D."/>
            <person name="Halldorsson B.V."/>
            <person name="Hannenhalli S."/>
            <person name="Turner R."/>
            <person name="Yooseph S."/>
            <person name="Lu F."/>
            <person name="Nusskern D.R."/>
            <person name="Shue B.C."/>
            <person name="Zheng X.H."/>
            <person name="Zhong F."/>
            <person name="Delcher A.L."/>
            <person name="Huson D.H."/>
            <person name="Kravitz S.A."/>
            <person name="Mouchard L."/>
            <person name="Reinert K."/>
            <person name="Remington K.A."/>
            <person name="Clark A.G."/>
            <person name="Waterman M.S."/>
            <person name="Eichler E.E."/>
            <person name="Adams M.D."/>
            <person name="Hunkapiller M.W."/>
            <person name="Myers E.W."/>
            <person name="Venter J.C."/>
        </authorList>
    </citation>
    <scope>NUCLEOTIDE SEQUENCE [LARGE SCALE GENOMIC DNA]</scope>
</reference>
<reference key="5">
    <citation type="journal article" date="2004" name="Genome Res.">
        <title>The status, quality, and expansion of the NIH full-length cDNA project: the Mammalian Gene Collection (MGC).</title>
        <authorList>
            <consortium name="The MGC Project Team"/>
        </authorList>
    </citation>
    <scope>NUCLEOTIDE SEQUENCE [LARGE SCALE MRNA] (ISOFORM 1)</scope>
    <source>
        <tissue>Kidney</tissue>
    </source>
</reference>
<protein>
    <recommendedName>
        <fullName>Zinc finger protein 213</fullName>
    </recommendedName>
    <alternativeName>
        <fullName>Putative transcription factor CR53</fullName>
    </alternativeName>
    <alternativeName>
        <fullName>Zinc finger protein with KRAB and SCAN domains 21</fullName>
    </alternativeName>
</protein>
<proteinExistence type="evidence at protein level"/>
<organism>
    <name type="scientific">Homo sapiens</name>
    <name type="common">Human</name>
    <dbReference type="NCBI Taxonomy" id="9606"/>
    <lineage>
        <taxon>Eukaryota</taxon>
        <taxon>Metazoa</taxon>
        <taxon>Chordata</taxon>
        <taxon>Craniata</taxon>
        <taxon>Vertebrata</taxon>
        <taxon>Euteleostomi</taxon>
        <taxon>Mammalia</taxon>
        <taxon>Eutheria</taxon>
        <taxon>Euarchontoglires</taxon>
        <taxon>Primates</taxon>
        <taxon>Haplorrhini</taxon>
        <taxon>Catarrhini</taxon>
        <taxon>Hominidae</taxon>
        <taxon>Homo</taxon>
    </lineage>
</organism>
<evidence type="ECO:0000255" key="1">
    <source>
        <dbReference type="PROSITE-ProRule" id="PRU00042"/>
    </source>
</evidence>
<evidence type="ECO:0000255" key="2">
    <source>
        <dbReference type="PROSITE-ProRule" id="PRU00119"/>
    </source>
</evidence>
<evidence type="ECO:0000255" key="3">
    <source>
        <dbReference type="PROSITE-ProRule" id="PRU00187"/>
    </source>
</evidence>
<evidence type="ECO:0000256" key="4">
    <source>
        <dbReference type="SAM" id="MobiDB-lite"/>
    </source>
</evidence>
<evidence type="ECO:0000269" key="5">
    <source>
    </source>
</evidence>
<evidence type="ECO:0000303" key="6">
    <source>
    </source>
</evidence>
<evidence type="ECO:0000305" key="7"/>
<gene>
    <name type="primary">ZNF213</name>
    <name type="synonym">ZKSCAN21</name>
</gene>
<dbReference type="EMBL" id="AF017433">
    <property type="protein sequence ID" value="AAB70531.1"/>
    <property type="status" value="ALT_FRAME"/>
    <property type="molecule type" value="mRNA"/>
</dbReference>
<dbReference type="EMBL" id="AK289834">
    <property type="protein sequence ID" value="BAF82523.1"/>
    <property type="molecule type" value="mRNA"/>
</dbReference>
<dbReference type="EMBL" id="AK291789">
    <property type="protein sequence ID" value="BAF84478.1"/>
    <property type="molecule type" value="mRNA"/>
</dbReference>
<dbReference type="EMBL" id="AK297454">
    <property type="protein sequence ID" value="BAG59878.1"/>
    <property type="molecule type" value="mRNA"/>
</dbReference>
<dbReference type="EMBL" id="AC108134">
    <property type="status" value="NOT_ANNOTATED_CDS"/>
    <property type="molecule type" value="Genomic_DNA"/>
</dbReference>
<dbReference type="EMBL" id="CH471112">
    <property type="protein sequence ID" value="EAW85394.1"/>
    <property type="molecule type" value="Genomic_DNA"/>
</dbReference>
<dbReference type="EMBL" id="BC007287">
    <property type="protein sequence ID" value="AAH07287.1"/>
    <property type="molecule type" value="mRNA"/>
</dbReference>
<dbReference type="CCDS" id="CCDS10495.1">
    <molecule id="O14771-1"/>
</dbReference>
<dbReference type="RefSeq" id="NP_001128127.1">
    <molecule id="O14771-1"/>
    <property type="nucleotide sequence ID" value="NM_001134655.2"/>
</dbReference>
<dbReference type="RefSeq" id="NP_004211.1">
    <molecule id="O14771-1"/>
    <property type="nucleotide sequence ID" value="NM_004220.3"/>
</dbReference>
<dbReference type="RefSeq" id="XP_054169847.1">
    <molecule id="O14771-1"/>
    <property type="nucleotide sequence ID" value="XM_054313872.1"/>
</dbReference>
<dbReference type="SMR" id="O14771"/>
<dbReference type="BioGRID" id="113543">
    <property type="interactions" value="36"/>
</dbReference>
<dbReference type="FunCoup" id="O14771">
    <property type="interactions" value="73"/>
</dbReference>
<dbReference type="IntAct" id="O14771">
    <property type="interactions" value="36"/>
</dbReference>
<dbReference type="MINT" id="O14771"/>
<dbReference type="STRING" id="9606.ENSP00000380087"/>
<dbReference type="GlyGen" id="O14771">
    <property type="glycosylation" value="1 site"/>
</dbReference>
<dbReference type="iPTMnet" id="O14771"/>
<dbReference type="PhosphoSitePlus" id="O14771"/>
<dbReference type="BioMuta" id="ZNF213"/>
<dbReference type="jPOST" id="O14771"/>
<dbReference type="MassIVE" id="O14771"/>
<dbReference type="PaxDb" id="9606-ENSP00000380087"/>
<dbReference type="PeptideAtlas" id="O14771"/>
<dbReference type="ProteomicsDB" id="4608"/>
<dbReference type="ProteomicsDB" id="48222">
    <molecule id="O14771-1"/>
</dbReference>
<dbReference type="ABCD" id="O14771">
    <property type="antibodies" value="7 sequenced antibodies"/>
</dbReference>
<dbReference type="Antibodypedia" id="10749">
    <property type="antibodies" value="182 antibodies from 20 providers"/>
</dbReference>
<dbReference type="DNASU" id="7760"/>
<dbReference type="Ensembl" id="ENST00000396878.8">
    <molecule id="O14771-1"/>
    <property type="protein sequence ID" value="ENSP00000380087.3"/>
    <property type="gene ID" value="ENSG00000085644.15"/>
</dbReference>
<dbReference type="Ensembl" id="ENST00000574902.5">
    <molecule id="O14771-1"/>
    <property type="protein sequence ID" value="ENSP00000460157.1"/>
    <property type="gene ID" value="ENSG00000085644.15"/>
</dbReference>
<dbReference type="Ensembl" id="ENST00000576416.5">
    <molecule id="O14771-1"/>
    <property type="protein sequence ID" value="ENSP00000459177.1"/>
    <property type="gene ID" value="ENSG00000085644.15"/>
</dbReference>
<dbReference type="GeneID" id="7760"/>
<dbReference type="KEGG" id="hsa:7760"/>
<dbReference type="MANE-Select" id="ENST00000396878.8">
    <property type="protein sequence ID" value="ENSP00000380087.3"/>
    <property type="RefSeq nucleotide sequence ID" value="NM_004220.3"/>
    <property type="RefSeq protein sequence ID" value="NP_004211.1"/>
</dbReference>
<dbReference type="UCSC" id="uc010bth.4">
    <molecule id="O14771-1"/>
    <property type="organism name" value="human"/>
</dbReference>
<dbReference type="AGR" id="HGNC:13005"/>
<dbReference type="CTD" id="7760"/>
<dbReference type="DisGeNET" id="7760"/>
<dbReference type="GeneCards" id="ZNF213"/>
<dbReference type="HGNC" id="HGNC:13005">
    <property type="gene designation" value="ZNF213"/>
</dbReference>
<dbReference type="HPA" id="ENSG00000085644">
    <property type="expression patterns" value="Low tissue specificity"/>
</dbReference>
<dbReference type="MIM" id="608387">
    <property type="type" value="gene"/>
</dbReference>
<dbReference type="neXtProt" id="NX_O14771"/>
<dbReference type="OpenTargets" id="ENSG00000085644"/>
<dbReference type="PharmGKB" id="PA37584"/>
<dbReference type="VEuPathDB" id="HostDB:ENSG00000085644"/>
<dbReference type="eggNOG" id="KOG1721">
    <property type="taxonomic scope" value="Eukaryota"/>
</dbReference>
<dbReference type="GeneTree" id="ENSGT00940000156663"/>
<dbReference type="HOGENOM" id="CLU_002678_49_3_1"/>
<dbReference type="InParanoid" id="O14771"/>
<dbReference type="OMA" id="GQTREPM"/>
<dbReference type="OrthoDB" id="654211at2759"/>
<dbReference type="PAN-GO" id="O14771">
    <property type="GO annotations" value="3 GO annotations based on evolutionary models"/>
</dbReference>
<dbReference type="PhylomeDB" id="O14771"/>
<dbReference type="TreeFam" id="TF350828"/>
<dbReference type="PathwayCommons" id="O14771"/>
<dbReference type="Reactome" id="R-HSA-212436">
    <property type="pathway name" value="Generic Transcription Pathway"/>
</dbReference>
<dbReference type="SignaLink" id="O14771"/>
<dbReference type="BioGRID-ORCS" id="7760">
    <property type="hits" value="25 hits in 1189 CRISPR screens"/>
</dbReference>
<dbReference type="GenomeRNAi" id="7760"/>
<dbReference type="Pharos" id="O14771">
    <property type="development level" value="Tbio"/>
</dbReference>
<dbReference type="PRO" id="PR:O14771"/>
<dbReference type="Proteomes" id="UP000005640">
    <property type="component" value="Chromosome 16"/>
</dbReference>
<dbReference type="RNAct" id="O14771">
    <property type="molecule type" value="protein"/>
</dbReference>
<dbReference type="Bgee" id="ENSG00000085644">
    <property type="expression patterns" value="Expressed in sperm and 185 other cell types or tissues"/>
</dbReference>
<dbReference type="ExpressionAtlas" id="O14771">
    <property type="expression patterns" value="baseline and differential"/>
</dbReference>
<dbReference type="GO" id="GO:0005634">
    <property type="term" value="C:nucleus"/>
    <property type="evidence" value="ECO:0007669"/>
    <property type="project" value="UniProtKB-SubCell"/>
</dbReference>
<dbReference type="GO" id="GO:0000981">
    <property type="term" value="F:DNA-binding transcription factor activity, RNA polymerase II-specific"/>
    <property type="evidence" value="ECO:0000318"/>
    <property type="project" value="GO_Central"/>
</dbReference>
<dbReference type="GO" id="GO:0000978">
    <property type="term" value="F:RNA polymerase II cis-regulatory region sequence-specific DNA binding"/>
    <property type="evidence" value="ECO:0000318"/>
    <property type="project" value="GO_Central"/>
</dbReference>
<dbReference type="GO" id="GO:0008270">
    <property type="term" value="F:zinc ion binding"/>
    <property type="evidence" value="ECO:0007669"/>
    <property type="project" value="UniProtKB-KW"/>
</dbReference>
<dbReference type="GO" id="GO:0006357">
    <property type="term" value="P:regulation of transcription by RNA polymerase II"/>
    <property type="evidence" value="ECO:0000318"/>
    <property type="project" value="GO_Central"/>
</dbReference>
<dbReference type="CDD" id="cd07765">
    <property type="entry name" value="KRAB_A-box"/>
    <property type="match status" value="1"/>
</dbReference>
<dbReference type="CDD" id="cd07936">
    <property type="entry name" value="SCAN"/>
    <property type="match status" value="1"/>
</dbReference>
<dbReference type="FunFam" id="3.30.160.60:FF:002716">
    <property type="entry name" value="Zinc finger protein 212"/>
    <property type="match status" value="1"/>
</dbReference>
<dbReference type="FunFam" id="3.30.160.60:FF:000869">
    <property type="entry name" value="Zinc finger protein 213"/>
    <property type="match status" value="2"/>
</dbReference>
<dbReference type="FunFam" id="1.10.4020.10:FF:000001">
    <property type="entry name" value="zinc finger protein 263 isoform X1"/>
    <property type="match status" value="1"/>
</dbReference>
<dbReference type="FunFam" id="3.30.160.60:FF:002090">
    <property type="entry name" value="Zinc finger protein 473"/>
    <property type="match status" value="1"/>
</dbReference>
<dbReference type="FunFam" id="3.30.160.60:FF:000628">
    <property type="entry name" value="zinc finger protein 768"/>
    <property type="match status" value="1"/>
</dbReference>
<dbReference type="Gene3D" id="6.10.140.140">
    <property type="match status" value="1"/>
</dbReference>
<dbReference type="Gene3D" id="3.30.160.60">
    <property type="entry name" value="Classic Zinc Finger"/>
    <property type="match status" value="5"/>
</dbReference>
<dbReference type="Gene3D" id="1.10.4020.10">
    <property type="entry name" value="DNA breaking-rejoining enzymes"/>
    <property type="match status" value="1"/>
</dbReference>
<dbReference type="InterPro" id="IPR050717">
    <property type="entry name" value="C2H2-ZF_Transcription_Reg"/>
</dbReference>
<dbReference type="InterPro" id="IPR001909">
    <property type="entry name" value="KRAB"/>
</dbReference>
<dbReference type="InterPro" id="IPR036051">
    <property type="entry name" value="KRAB_dom_sf"/>
</dbReference>
<dbReference type="InterPro" id="IPR003309">
    <property type="entry name" value="SCAN_dom"/>
</dbReference>
<dbReference type="InterPro" id="IPR038269">
    <property type="entry name" value="SCAN_sf"/>
</dbReference>
<dbReference type="InterPro" id="IPR036236">
    <property type="entry name" value="Znf_C2H2_sf"/>
</dbReference>
<dbReference type="InterPro" id="IPR013087">
    <property type="entry name" value="Znf_C2H2_type"/>
</dbReference>
<dbReference type="PANTHER" id="PTHR14196">
    <property type="entry name" value="ODD-SKIPPED - RELATED"/>
    <property type="match status" value="1"/>
</dbReference>
<dbReference type="PANTHER" id="PTHR14196:SF12">
    <property type="entry name" value="ZINC FINGER PROTEIN 208-LIKE"/>
    <property type="match status" value="1"/>
</dbReference>
<dbReference type="Pfam" id="PF01352">
    <property type="entry name" value="KRAB"/>
    <property type="match status" value="1"/>
</dbReference>
<dbReference type="Pfam" id="PF02023">
    <property type="entry name" value="SCAN"/>
    <property type="match status" value="1"/>
</dbReference>
<dbReference type="Pfam" id="PF00096">
    <property type="entry name" value="zf-C2H2"/>
    <property type="match status" value="3"/>
</dbReference>
<dbReference type="Pfam" id="PF13465">
    <property type="entry name" value="zf-H2C2_2"/>
    <property type="match status" value="1"/>
</dbReference>
<dbReference type="SMART" id="SM00349">
    <property type="entry name" value="KRAB"/>
    <property type="match status" value="1"/>
</dbReference>
<dbReference type="SMART" id="SM00431">
    <property type="entry name" value="SCAN"/>
    <property type="match status" value="1"/>
</dbReference>
<dbReference type="SMART" id="SM00355">
    <property type="entry name" value="ZnF_C2H2"/>
    <property type="match status" value="5"/>
</dbReference>
<dbReference type="SUPFAM" id="SSF57667">
    <property type="entry name" value="beta-beta-alpha zinc fingers"/>
    <property type="match status" value="3"/>
</dbReference>
<dbReference type="SUPFAM" id="SSF109640">
    <property type="entry name" value="KRAB domain (Kruppel-associated box)"/>
    <property type="match status" value="1"/>
</dbReference>
<dbReference type="SUPFAM" id="SSF47353">
    <property type="entry name" value="Retrovirus capsid dimerization domain-like"/>
    <property type="match status" value="1"/>
</dbReference>
<dbReference type="PROSITE" id="PS50805">
    <property type="entry name" value="KRAB"/>
    <property type="match status" value="1"/>
</dbReference>
<dbReference type="PROSITE" id="PS50804">
    <property type="entry name" value="SCAN_BOX"/>
    <property type="match status" value="1"/>
</dbReference>
<dbReference type="PROSITE" id="PS00028">
    <property type="entry name" value="ZINC_FINGER_C2H2_1"/>
    <property type="match status" value="5"/>
</dbReference>
<dbReference type="PROSITE" id="PS50157">
    <property type="entry name" value="ZINC_FINGER_C2H2_2"/>
    <property type="match status" value="5"/>
</dbReference>
<sequence length="459" mass="51263">MAAPLEAQDQAPGEGEGLLIVKVEDSSWEQESAQHEDGRDSEACRQRFRQFCYGDVHGPHEAFSQLWELCCRWLRPELRTKEQILELLVLEQFLTVLPGEIQGWVREQHPGSGEEAVALVEDLQKQPVKAWRQDVPSEEAEPEAAGRGSQATGPPPTVGARRRPSVPQEQHSHSAQPPALLKEGRPGETTDTCFVSGVHGPVALGDIPFYFSREEWGTLDPAQRDLFWDIKRENSRNTTLGFGLKGQSEKSLLQEMVPVVPGQTGSDVTVSWSPEEAEAWESENRPRAALGPVVGARRGRPPTRRRQFRDLAAEKPHSCGQCGKRFRWGSDLARHQRTHTGEKPHKCPECDKSFRSSSDLVRHQGVHTGEKPFSCSECGKSFSRSAYLADHQRIHTGEKPFGCSDCGKSFSLRSYLLDHRRVHTGERPFGCGECDKSFKQRAHLIAHQSLHAKMAQPVG</sequence>